<name>RL1_DESPS</name>
<keyword id="KW-1185">Reference proteome</keyword>
<keyword id="KW-0678">Repressor</keyword>
<keyword id="KW-0687">Ribonucleoprotein</keyword>
<keyword id="KW-0689">Ribosomal protein</keyword>
<keyword id="KW-0694">RNA-binding</keyword>
<keyword id="KW-0699">rRNA-binding</keyword>
<keyword id="KW-0810">Translation regulation</keyword>
<keyword id="KW-0820">tRNA-binding</keyword>
<organism>
    <name type="scientific">Desulfotalea psychrophila (strain LSv54 / DSM 12343)</name>
    <dbReference type="NCBI Taxonomy" id="177439"/>
    <lineage>
        <taxon>Bacteria</taxon>
        <taxon>Pseudomonadati</taxon>
        <taxon>Thermodesulfobacteriota</taxon>
        <taxon>Desulfobulbia</taxon>
        <taxon>Desulfobulbales</taxon>
        <taxon>Desulfocapsaceae</taxon>
        <taxon>Desulfotalea</taxon>
    </lineage>
</organism>
<proteinExistence type="inferred from homology"/>
<sequence>MPKRGKNYSNKSQSFDKQQVYTLEEAVGHVLATSYAKFDETFDIAIKLGVDPRHADQMIRSSVVLPHGTGKVTRVLVFAKGAKEAEAREAGADFVGGDDLVEKIQGGWLEFDKTVATPDMMGTVGKIGRVLGPRNLMPNAKLGTVTFDVAKVIEEIKSGKVDFKVEKAGILHAGIGKISFGNEKLTANALAFIEKIIQLKPSSSKGVYLKSVTISSTMGPGVKVDPVYLRALVKK</sequence>
<reference key="1">
    <citation type="journal article" date="2004" name="Environ. Microbiol.">
        <title>The genome of Desulfotalea psychrophila, a sulfate-reducing bacterium from permanently cold Arctic sediments.</title>
        <authorList>
            <person name="Rabus R."/>
            <person name="Ruepp A."/>
            <person name="Frickey T."/>
            <person name="Rattei T."/>
            <person name="Fartmann B."/>
            <person name="Stark M."/>
            <person name="Bauer M."/>
            <person name="Zibat A."/>
            <person name="Lombardot T."/>
            <person name="Becker I."/>
            <person name="Amann J."/>
            <person name="Gellner K."/>
            <person name="Teeling H."/>
            <person name="Leuschner W.D."/>
            <person name="Gloeckner F.-O."/>
            <person name="Lupas A.N."/>
            <person name="Amann R."/>
            <person name="Klenk H.-P."/>
        </authorList>
    </citation>
    <scope>NUCLEOTIDE SEQUENCE [LARGE SCALE GENOMIC DNA]</scope>
    <source>
        <strain>DSM 12343 / LSv54</strain>
    </source>
</reference>
<gene>
    <name evidence="1" type="primary">rplA</name>
    <name type="ordered locus">DP1114</name>
</gene>
<feature type="chain" id="PRO_0000125652" description="Large ribosomal subunit protein uL1">
    <location>
        <begin position="1"/>
        <end position="235"/>
    </location>
</feature>
<dbReference type="EMBL" id="CR522870">
    <property type="protein sequence ID" value="CAG35843.1"/>
    <property type="molecule type" value="Genomic_DNA"/>
</dbReference>
<dbReference type="RefSeq" id="WP_011188357.1">
    <property type="nucleotide sequence ID" value="NC_006138.1"/>
</dbReference>
<dbReference type="SMR" id="Q6AP81"/>
<dbReference type="STRING" id="177439.DP1114"/>
<dbReference type="KEGG" id="dps:DP1114"/>
<dbReference type="eggNOG" id="COG0081">
    <property type="taxonomic scope" value="Bacteria"/>
</dbReference>
<dbReference type="HOGENOM" id="CLU_062853_0_0_7"/>
<dbReference type="OrthoDB" id="9803740at2"/>
<dbReference type="Proteomes" id="UP000000602">
    <property type="component" value="Chromosome"/>
</dbReference>
<dbReference type="GO" id="GO:0015934">
    <property type="term" value="C:large ribosomal subunit"/>
    <property type="evidence" value="ECO:0007669"/>
    <property type="project" value="InterPro"/>
</dbReference>
<dbReference type="GO" id="GO:0019843">
    <property type="term" value="F:rRNA binding"/>
    <property type="evidence" value="ECO:0007669"/>
    <property type="project" value="UniProtKB-UniRule"/>
</dbReference>
<dbReference type="GO" id="GO:0003735">
    <property type="term" value="F:structural constituent of ribosome"/>
    <property type="evidence" value="ECO:0007669"/>
    <property type="project" value="InterPro"/>
</dbReference>
<dbReference type="GO" id="GO:0000049">
    <property type="term" value="F:tRNA binding"/>
    <property type="evidence" value="ECO:0007669"/>
    <property type="project" value="UniProtKB-KW"/>
</dbReference>
<dbReference type="GO" id="GO:0006417">
    <property type="term" value="P:regulation of translation"/>
    <property type="evidence" value="ECO:0007669"/>
    <property type="project" value="UniProtKB-KW"/>
</dbReference>
<dbReference type="GO" id="GO:0006412">
    <property type="term" value="P:translation"/>
    <property type="evidence" value="ECO:0007669"/>
    <property type="project" value="UniProtKB-UniRule"/>
</dbReference>
<dbReference type="CDD" id="cd00403">
    <property type="entry name" value="Ribosomal_L1"/>
    <property type="match status" value="1"/>
</dbReference>
<dbReference type="FunFam" id="3.40.50.790:FF:000001">
    <property type="entry name" value="50S ribosomal protein L1"/>
    <property type="match status" value="1"/>
</dbReference>
<dbReference type="Gene3D" id="3.30.190.20">
    <property type="match status" value="1"/>
</dbReference>
<dbReference type="Gene3D" id="3.40.50.790">
    <property type="match status" value="1"/>
</dbReference>
<dbReference type="HAMAP" id="MF_01318_B">
    <property type="entry name" value="Ribosomal_uL1_B"/>
    <property type="match status" value="1"/>
</dbReference>
<dbReference type="InterPro" id="IPR005878">
    <property type="entry name" value="Ribosom_uL1_bac-type"/>
</dbReference>
<dbReference type="InterPro" id="IPR002143">
    <property type="entry name" value="Ribosomal_uL1"/>
</dbReference>
<dbReference type="InterPro" id="IPR023674">
    <property type="entry name" value="Ribosomal_uL1-like"/>
</dbReference>
<dbReference type="InterPro" id="IPR028364">
    <property type="entry name" value="Ribosomal_uL1/biogenesis"/>
</dbReference>
<dbReference type="InterPro" id="IPR016095">
    <property type="entry name" value="Ribosomal_uL1_3-a/b-sand"/>
</dbReference>
<dbReference type="InterPro" id="IPR023673">
    <property type="entry name" value="Ribosomal_uL1_CS"/>
</dbReference>
<dbReference type="NCBIfam" id="TIGR01169">
    <property type="entry name" value="rplA_bact"/>
    <property type="match status" value="1"/>
</dbReference>
<dbReference type="PANTHER" id="PTHR36427">
    <property type="entry name" value="54S RIBOSOMAL PROTEIN L1, MITOCHONDRIAL"/>
    <property type="match status" value="1"/>
</dbReference>
<dbReference type="PANTHER" id="PTHR36427:SF3">
    <property type="entry name" value="LARGE RIBOSOMAL SUBUNIT PROTEIN UL1M"/>
    <property type="match status" value="1"/>
</dbReference>
<dbReference type="Pfam" id="PF00687">
    <property type="entry name" value="Ribosomal_L1"/>
    <property type="match status" value="1"/>
</dbReference>
<dbReference type="PIRSF" id="PIRSF002155">
    <property type="entry name" value="Ribosomal_L1"/>
    <property type="match status" value="1"/>
</dbReference>
<dbReference type="SUPFAM" id="SSF56808">
    <property type="entry name" value="Ribosomal protein L1"/>
    <property type="match status" value="1"/>
</dbReference>
<dbReference type="PROSITE" id="PS01199">
    <property type="entry name" value="RIBOSOMAL_L1"/>
    <property type="match status" value="1"/>
</dbReference>
<evidence type="ECO:0000255" key="1">
    <source>
        <dbReference type="HAMAP-Rule" id="MF_01318"/>
    </source>
</evidence>
<evidence type="ECO:0000305" key="2"/>
<comment type="function">
    <text evidence="1">Binds directly to 23S rRNA. The L1 stalk is quite mobile in the ribosome, and is involved in E site tRNA release.</text>
</comment>
<comment type="function">
    <text evidence="1">Protein L1 is also a translational repressor protein, it controls the translation of the L11 operon by binding to its mRNA.</text>
</comment>
<comment type="subunit">
    <text evidence="1">Part of the 50S ribosomal subunit.</text>
</comment>
<comment type="similarity">
    <text evidence="1">Belongs to the universal ribosomal protein uL1 family.</text>
</comment>
<accession>Q6AP81</accession>
<protein>
    <recommendedName>
        <fullName evidence="1">Large ribosomal subunit protein uL1</fullName>
    </recommendedName>
    <alternativeName>
        <fullName evidence="2">50S ribosomal protein L1</fullName>
    </alternativeName>
</protein>